<feature type="chain" id="PRO_1000114816" description="Pyridoxine 5'-phosphate synthase">
    <location>
        <begin position="1"/>
        <end position="240"/>
    </location>
</feature>
<feature type="active site" description="Proton acceptor" evidence="1">
    <location>
        <position position="43"/>
    </location>
</feature>
<feature type="active site" description="Proton acceptor" evidence="1">
    <location>
        <position position="70"/>
    </location>
</feature>
<feature type="active site" description="Proton donor" evidence="1">
    <location>
        <position position="191"/>
    </location>
</feature>
<feature type="binding site" evidence="1">
    <location>
        <position position="7"/>
    </location>
    <ligand>
        <name>3-amino-2-oxopropyl phosphate</name>
        <dbReference type="ChEBI" id="CHEBI:57279"/>
    </ligand>
</feature>
<feature type="binding site" evidence="1">
    <location>
        <begin position="9"/>
        <end position="10"/>
    </location>
    <ligand>
        <name>1-deoxy-D-xylulose 5-phosphate</name>
        <dbReference type="ChEBI" id="CHEBI:57792"/>
    </ligand>
</feature>
<feature type="binding site" evidence="1">
    <location>
        <position position="18"/>
    </location>
    <ligand>
        <name>3-amino-2-oxopropyl phosphate</name>
        <dbReference type="ChEBI" id="CHEBI:57279"/>
    </ligand>
</feature>
<feature type="binding site" evidence="1">
    <location>
        <position position="45"/>
    </location>
    <ligand>
        <name>1-deoxy-D-xylulose 5-phosphate</name>
        <dbReference type="ChEBI" id="CHEBI:57792"/>
    </ligand>
</feature>
<feature type="binding site" evidence="1">
    <location>
        <position position="50"/>
    </location>
    <ligand>
        <name>1-deoxy-D-xylulose 5-phosphate</name>
        <dbReference type="ChEBI" id="CHEBI:57792"/>
    </ligand>
</feature>
<feature type="binding site" evidence="1">
    <location>
        <position position="100"/>
    </location>
    <ligand>
        <name>1-deoxy-D-xylulose 5-phosphate</name>
        <dbReference type="ChEBI" id="CHEBI:57792"/>
    </ligand>
</feature>
<feature type="binding site" evidence="1">
    <location>
        <position position="192"/>
    </location>
    <ligand>
        <name>3-amino-2-oxopropyl phosphate</name>
        <dbReference type="ChEBI" id="CHEBI:57279"/>
    </ligand>
</feature>
<feature type="binding site" evidence="1">
    <location>
        <begin position="213"/>
        <end position="214"/>
    </location>
    <ligand>
        <name>3-amino-2-oxopropyl phosphate</name>
        <dbReference type="ChEBI" id="CHEBI:57279"/>
    </ligand>
</feature>
<feature type="site" description="Transition state stabilizer" evidence="1">
    <location>
        <position position="151"/>
    </location>
</feature>
<keyword id="KW-0963">Cytoplasm</keyword>
<keyword id="KW-0664">Pyridoxine biosynthesis</keyword>
<keyword id="KW-0808">Transferase</keyword>
<accession>B3DF93</accession>
<sequence>MLTLGVNIDHVATIRQARRTVEPDPVAAAVLAEIGGADGITVHLREDRRHIQDRDVRILRQTVRTHLNLEMAPTEEMIAIALDIKPDYVTLVPEKRQEVTTEGGIDMLGNFDRFCRVVERLQAANIPVSWFIDADFAQIQAAANTGAKFIELHTGQYAEAQQESDRQALLTILKEGCEYASSLGLRVNAGHGLTYGNVYAVACLPNMEELNIGHTIISRAVLVGLERAVREMKLAMRGQL</sequence>
<protein>
    <recommendedName>
        <fullName evidence="1">Pyridoxine 5'-phosphate synthase</fullName>
        <shortName evidence="1">PNP synthase</shortName>
        <ecNumber evidence="1">2.6.99.2</ecNumber>
    </recommendedName>
</protein>
<evidence type="ECO:0000255" key="1">
    <source>
        <dbReference type="HAMAP-Rule" id="MF_00279"/>
    </source>
</evidence>
<comment type="function">
    <text evidence="1">Catalyzes the complicated ring closure reaction between the two acyclic compounds 1-deoxy-D-xylulose-5-phosphate (DXP) and 3-amino-2-oxopropyl phosphate (1-amino-acetone-3-phosphate or AAP) to form pyridoxine 5'-phosphate (PNP) and inorganic phosphate.</text>
</comment>
<comment type="catalytic activity">
    <reaction evidence="1">
        <text>3-amino-2-oxopropyl phosphate + 1-deoxy-D-xylulose 5-phosphate = pyridoxine 5'-phosphate + phosphate + 2 H2O + H(+)</text>
        <dbReference type="Rhea" id="RHEA:15265"/>
        <dbReference type="ChEBI" id="CHEBI:15377"/>
        <dbReference type="ChEBI" id="CHEBI:15378"/>
        <dbReference type="ChEBI" id="CHEBI:43474"/>
        <dbReference type="ChEBI" id="CHEBI:57279"/>
        <dbReference type="ChEBI" id="CHEBI:57792"/>
        <dbReference type="ChEBI" id="CHEBI:58589"/>
        <dbReference type="EC" id="2.6.99.2"/>
    </reaction>
</comment>
<comment type="pathway">
    <text evidence="1">Cofactor biosynthesis; pyridoxine 5'-phosphate biosynthesis; pyridoxine 5'-phosphate from D-erythrose 4-phosphate: step 5/5.</text>
</comment>
<comment type="subunit">
    <text evidence="1">Homooctamer; tetramer of dimers.</text>
</comment>
<comment type="subcellular location">
    <subcellularLocation>
        <location evidence="1">Cytoplasm</location>
    </subcellularLocation>
</comment>
<comment type="similarity">
    <text evidence="1">Belongs to the PNP synthase family.</text>
</comment>
<dbReference type="EC" id="2.6.99.2" evidence="1"/>
<dbReference type="EMBL" id="AP009552">
    <property type="protein sequence ID" value="BAG48278.1"/>
    <property type="molecule type" value="Genomic_DNA"/>
</dbReference>
<dbReference type="SMR" id="B3DF93"/>
<dbReference type="STRING" id="449447.MAE_23925"/>
<dbReference type="PaxDb" id="449447-MAE_23925"/>
<dbReference type="EnsemblBacteria" id="BAG48278">
    <property type="protein sequence ID" value="BAG48278"/>
    <property type="gene ID" value="MAE_23925"/>
</dbReference>
<dbReference type="KEGG" id="mar:MAE_23925"/>
<dbReference type="eggNOG" id="COG0854">
    <property type="taxonomic scope" value="Bacteria"/>
</dbReference>
<dbReference type="HOGENOM" id="CLU_074563_0_0_3"/>
<dbReference type="UniPathway" id="UPA00244">
    <property type="reaction ID" value="UER00313"/>
</dbReference>
<dbReference type="Proteomes" id="UP000001510">
    <property type="component" value="Chromosome"/>
</dbReference>
<dbReference type="GO" id="GO:0005829">
    <property type="term" value="C:cytosol"/>
    <property type="evidence" value="ECO:0007669"/>
    <property type="project" value="TreeGrafter"/>
</dbReference>
<dbReference type="GO" id="GO:0033856">
    <property type="term" value="F:pyridoxine 5'-phosphate synthase activity"/>
    <property type="evidence" value="ECO:0007669"/>
    <property type="project" value="UniProtKB-EC"/>
</dbReference>
<dbReference type="GO" id="GO:0008615">
    <property type="term" value="P:pyridoxine biosynthetic process"/>
    <property type="evidence" value="ECO:0007669"/>
    <property type="project" value="UniProtKB-UniRule"/>
</dbReference>
<dbReference type="CDD" id="cd00003">
    <property type="entry name" value="PNPsynthase"/>
    <property type="match status" value="1"/>
</dbReference>
<dbReference type="FunFam" id="3.20.20.70:FF:000042">
    <property type="entry name" value="Pyridoxine 5'-phosphate synthase"/>
    <property type="match status" value="1"/>
</dbReference>
<dbReference type="Gene3D" id="3.20.20.70">
    <property type="entry name" value="Aldolase class I"/>
    <property type="match status" value="1"/>
</dbReference>
<dbReference type="HAMAP" id="MF_00279">
    <property type="entry name" value="PdxJ"/>
    <property type="match status" value="1"/>
</dbReference>
<dbReference type="InterPro" id="IPR013785">
    <property type="entry name" value="Aldolase_TIM"/>
</dbReference>
<dbReference type="InterPro" id="IPR004569">
    <property type="entry name" value="PyrdxlP_synth_PdxJ"/>
</dbReference>
<dbReference type="InterPro" id="IPR036130">
    <property type="entry name" value="Pyridoxine-5'_phos_synth"/>
</dbReference>
<dbReference type="NCBIfam" id="TIGR00559">
    <property type="entry name" value="pdxJ"/>
    <property type="match status" value="1"/>
</dbReference>
<dbReference type="NCBIfam" id="NF003623">
    <property type="entry name" value="PRK05265.1-1"/>
    <property type="match status" value="1"/>
</dbReference>
<dbReference type="NCBIfam" id="NF003625">
    <property type="entry name" value="PRK05265.1-3"/>
    <property type="match status" value="1"/>
</dbReference>
<dbReference type="NCBIfam" id="NF003627">
    <property type="entry name" value="PRK05265.1-5"/>
    <property type="match status" value="1"/>
</dbReference>
<dbReference type="PANTHER" id="PTHR30456">
    <property type="entry name" value="PYRIDOXINE 5'-PHOSPHATE SYNTHASE"/>
    <property type="match status" value="1"/>
</dbReference>
<dbReference type="PANTHER" id="PTHR30456:SF0">
    <property type="entry name" value="PYRIDOXINE 5'-PHOSPHATE SYNTHASE"/>
    <property type="match status" value="1"/>
</dbReference>
<dbReference type="Pfam" id="PF03740">
    <property type="entry name" value="PdxJ"/>
    <property type="match status" value="1"/>
</dbReference>
<dbReference type="SUPFAM" id="SSF63892">
    <property type="entry name" value="Pyridoxine 5'-phosphate synthase"/>
    <property type="match status" value="1"/>
</dbReference>
<organism>
    <name type="scientific">Microcystis aeruginosa (strain NIES-843 / IAM M-2473)</name>
    <dbReference type="NCBI Taxonomy" id="449447"/>
    <lineage>
        <taxon>Bacteria</taxon>
        <taxon>Bacillati</taxon>
        <taxon>Cyanobacteriota</taxon>
        <taxon>Cyanophyceae</taxon>
        <taxon>Oscillatoriophycideae</taxon>
        <taxon>Chroococcales</taxon>
        <taxon>Microcystaceae</taxon>
        <taxon>Microcystis</taxon>
    </lineage>
</organism>
<reference key="1">
    <citation type="journal article" date="2007" name="DNA Res.">
        <title>Complete genomic structure of the bloom-forming toxic cyanobacterium Microcystis aeruginosa NIES-843.</title>
        <authorList>
            <person name="Kaneko T."/>
            <person name="Nakajima N."/>
            <person name="Okamoto S."/>
            <person name="Suzuki I."/>
            <person name="Tanabe Y."/>
            <person name="Tamaoki M."/>
            <person name="Nakamura Y."/>
            <person name="Kasai F."/>
            <person name="Watanabe A."/>
            <person name="Kawashima K."/>
            <person name="Kishida Y."/>
            <person name="Ono A."/>
            <person name="Shimizu Y."/>
            <person name="Takahashi C."/>
            <person name="Minami C."/>
            <person name="Fujishiro T."/>
            <person name="Kohara M."/>
            <person name="Katoh M."/>
            <person name="Nakazaki N."/>
            <person name="Nakayama S."/>
            <person name="Yamada M."/>
            <person name="Tabata S."/>
            <person name="Watanabe M.M."/>
        </authorList>
    </citation>
    <scope>NUCLEOTIDE SEQUENCE [LARGE SCALE GENOMIC DNA]</scope>
    <source>
        <strain>NIES-843 / IAM M-247</strain>
    </source>
</reference>
<gene>
    <name evidence="1" type="primary">pdxJ</name>
    <name type="ordered locus">MAE_23925</name>
</gene>
<proteinExistence type="inferred from homology"/>
<name>PDXJ_MICAN</name>